<keyword id="KW-0067">ATP-binding</keyword>
<keyword id="KW-0963">Cytoplasm</keyword>
<keyword id="KW-1015">Disulfide bond</keyword>
<keyword id="KW-0547">Nucleotide-binding</keyword>
<keyword id="KW-1185">Reference proteome</keyword>
<keyword id="KW-0694">RNA-binding</keyword>
<keyword id="KW-0808">Transferase</keyword>
<keyword id="KW-0819">tRNA processing</keyword>
<keyword id="KW-0820">tRNA-binding</keyword>
<comment type="function">
    <text evidence="1">Catalyzes the 2-thiolation of uridine at the wobble position (U34) of tRNA, leading to the formation of s(2)U34.</text>
</comment>
<comment type="catalytic activity">
    <reaction evidence="1">
        <text>S-sulfanyl-L-cysteinyl-[protein] + uridine(34) in tRNA + AH2 + ATP = 2-thiouridine(34) in tRNA + L-cysteinyl-[protein] + A + AMP + diphosphate + H(+)</text>
        <dbReference type="Rhea" id="RHEA:47032"/>
        <dbReference type="Rhea" id="RHEA-COMP:10131"/>
        <dbReference type="Rhea" id="RHEA-COMP:11726"/>
        <dbReference type="Rhea" id="RHEA-COMP:11727"/>
        <dbReference type="Rhea" id="RHEA-COMP:11728"/>
        <dbReference type="ChEBI" id="CHEBI:13193"/>
        <dbReference type="ChEBI" id="CHEBI:15378"/>
        <dbReference type="ChEBI" id="CHEBI:17499"/>
        <dbReference type="ChEBI" id="CHEBI:29950"/>
        <dbReference type="ChEBI" id="CHEBI:30616"/>
        <dbReference type="ChEBI" id="CHEBI:33019"/>
        <dbReference type="ChEBI" id="CHEBI:61963"/>
        <dbReference type="ChEBI" id="CHEBI:65315"/>
        <dbReference type="ChEBI" id="CHEBI:87170"/>
        <dbReference type="ChEBI" id="CHEBI:456215"/>
        <dbReference type="EC" id="2.8.1.13"/>
    </reaction>
</comment>
<comment type="subcellular location">
    <subcellularLocation>
        <location evidence="1">Cytoplasm</location>
    </subcellularLocation>
</comment>
<comment type="similarity">
    <text evidence="1">Belongs to the MnmA/TRMU family.</text>
</comment>
<gene>
    <name evidence="1" type="primary">mnmA</name>
    <name type="ordered locus">TM1040_1401</name>
</gene>
<evidence type="ECO:0000255" key="1">
    <source>
        <dbReference type="HAMAP-Rule" id="MF_00144"/>
    </source>
</evidence>
<dbReference type="EC" id="2.8.1.13" evidence="1"/>
<dbReference type="EMBL" id="CP000377">
    <property type="protein sequence ID" value="ABF64134.1"/>
    <property type="molecule type" value="Genomic_DNA"/>
</dbReference>
<dbReference type="RefSeq" id="WP_011538738.1">
    <property type="nucleotide sequence ID" value="NC_008044.1"/>
</dbReference>
<dbReference type="SMR" id="Q1GGT2"/>
<dbReference type="STRING" id="292414.TM1040_1401"/>
<dbReference type="KEGG" id="sit:TM1040_1401"/>
<dbReference type="eggNOG" id="COG0482">
    <property type="taxonomic scope" value="Bacteria"/>
</dbReference>
<dbReference type="HOGENOM" id="CLU_035188_0_1_5"/>
<dbReference type="OrthoDB" id="9800696at2"/>
<dbReference type="Proteomes" id="UP000000636">
    <property type="component" value="Chromosome"/>
</dbReference>
<dbReference type="GO" id="GO:0005737">
    <property type="term" value="C:cytoplasm"/>
    <property type="evidence" value="ECO:0007669"/>
    <property type="project" value="UniProtKB-SubCell"/>
</dbReference>
<dbReference type="GO" id="GO:0005524">
    <property type="term" value="F:ATP binding"/>
    <property type="evidence" value="ECO:0007669"/>
    <property type="project" value="UniProtKB-KW"/>
</dbReference>
<dbReference type="GO" id="GO:0000049">
    <property type="term" value="F:tRNA binding"/>
    <property type="evidence" value="ECO:0007669"/>
    <property type="project" value="UniProtKB-KW"/>
</dbReference>
<dbReference type="GO" id="GO:0103016">
    <property type="term" value="F:tRNA-uridine 2-sulfurtransferase activity"/>
    <property type="evidence" value="ECO:0007669"/>
    <property type="project" value="UniProtKB-EC"/>
</dbReference>
<dbReference type="GO" id="GO:0002143">
    <property type="term" value="P:tRNA wobble position uridine thiolation"/>
    <property type="evidence" value="ECO:0007669"/>
    <property type="project" value="TreeGrafter"/>
</dbReference>
<dbReference type="CDD" id="cd01998">
    <property type="entry name" value="MnmA_TRMU-like"/>
    <property type="match status" value="1"/>
</dbReference>
<dbReference type="FunFam" id="2.30.30.280:FF:000001">
    <property type="entry name" value="tRNA-specific 2-thiouridylase MnmA"/>
    <property type="match status" value="1"/>
</dbReference>
<dbReference type="FunFam" id="3.40.50.620:FF:000115">
    <property type="entry name" value="tRNA-specific 2-thiouridylase MnmA"/>
    <property type="match status" value="1"/>
</dbReference>
<dbReference type="Gene3D" id="2.30.30.280">
    <property type="entry name" value="Adenine nucleotide alpha hydrolases-like domains"/>
    <property type="match status" value="1"/>
</dbReference>
<dbReference type="Gene3D" id="3.40.50.620">
    <property type="entry name" value="HUPs"/>
    <property type="match status" value="1"/>
</dbReference>
<dbReference type="Gene3D" id="2.40.30.10">
    <property type="entry name" value="Translation factors"/>
    <property type="match status" value="1"/>
</dbReference>
<dbReference type="HAMAP" id="MF_00144">
    <property type="entry name" value="tRNA_thiouridyl_MnmA"/>
    <property type="match status" value="1"/>
</dbReference>
<dbReference type="InterPro" id="IPR004506">
    <property type="entry name" value="MnmA-like"/>
</dbReference>
<dbReference type="InterPro" id="IPR046885">
    <property type="entry name" value="MnmA-like_C"/>
</dbReference>
<dbReference type="InterPro" id="IPR046884">
    <property type="entry name" value="MnmA-like_central"/>
</dbReference>
<dbReference type="InterPro" id="IPR023382">
    <property type="entry name" value="MnmA-like_central_sf"/>
</dbReference>
<dbReference type="InterPro" id="IPR014729">
    <property type="entry name" value="Rossmann-like_a/b/a_fold"/>
</dbReference>
<dbReference type="NCBIfam" id="NF001138">
    <property type="entry name" value="PRK00143.1"/>
    <property type="match status" value="1"/>
</dbReference>
<dbReference type="NCBIfam" id="TIGR00420">
    <property type="entry name" value="trmU"/>
    <property type="match status" value="1"/>
</dbReference>
<dbReference type="PANTHER" id="PTHR11933:SF5">
    <property type="entry name" value="MITOCHONDRIAL TRNA-SPECIFIC 2-THIOURIDYLASE 1"/>
    <property type="match status" value="1"/>
</dbReference>
<dbReference type="PANTHER" id="PTHR11933">
    <property type="entry name" value="TRNA 5-METHYLAMINOMETHYL-2-THIOURIDYLATE -METHYLTRANSFERASE"/>
    <property type="match status" value="1"/>
</dbReference>
<dbReference type="Pfam" id="PF03054">
    <property type="entry name" value="tRNA_Me_trans"/>
    <property type="match status" value="1"/>
</dbReference>
<dbReference type="Pfam" id="PF20258">
    <property type="entry name" value="tRNA_Me_trans_C"/>
    <property type="match status" value="1"/>
</dbReference>
<dbReference type="Pfam" id="PF20259">
    <property type="entry name" value="tRNA_Me_trans_M"/>
    <property type="match status" value="1"/>
</dbReference>
<dbReference type="SUPFAM" id="SSF52402">
    <property type="entry name" value="Adenine nucleotide alpha hydrolases-like"/>
    <property type="match status" value="1"/>
</dbReference>
<accession>Q1GGT2</accession>
<name>MNMA_RUEST</name>
<feature type="chain" id="PRO_0000349801" description="tRNA-specific 2-thiouridylase MnmA">
    <location>
        <begin position="1"/>
        <end position="381"/>
    </location>
</feature>
<feature type="region of interest" description="Interaction with tRNA" evidence="1">
    <location>
        <begin position="166"/>
        <end position="168"/>
    </location>
</feature>
<feature type="active site" description="Nucleophile" evidence="1">
    <location>
        <position position="120"/>
    </location>
</feature>
<feature type="active site" description="Cysteine persulfide intermediate" evidence="1">
    <location>
        <position position="217"/>
    </location>
</feature>
<feature type="binding site" evidence="1">
    <location>
        <begin position="26"/>
        <end position="33"/>
    </location>
    <ligand>
        <name>ATP</name>
        <dbReference type="ChEBI" id="CHEBI:30616"/>
    </ligand>
</feature>
<feature type="binding site" evidence="1">
    <location>
        <position position="52"/>
    </location>
    <ligand>
        <name>ATP</name>
        <dbReference type="ChEBI" id="CHEBI:30616"/>
    </ligand>
</feature>
<feature type="binding site" evidence="1">
    <location>
        <position position="144"/>
    </location>
    <ligand>
        <name>ATP</name>
        <dbReference type="ChEBI" id="CHEBI:30616"/>
    </ligand>
</feature>
<feature type="site" description="Interaction with tRNA" evidence="1">
    <location>
        <position position="145"/>
    </location>
</feature>
<feature type="site" description="Interaction with tRNA" evidence="1">
    <location>
        <position position="359"/>
    </location>
</feature>
<feature type="disulfide bond" description="Alternate" evidence="1">
    <location>
        <begin position="120"/>
        <end position="217"/>
    </location>
</feature>
<reference key="1">
    <citation type="submission" date="2006-05" db="EMBL/GenBank/DDBJ databases">
        <title>Complete sequence of chromosome of Silicibacter sp. TM1040.</title>
        <authorList>
            <consortium name="US DOE Joint Genome Institute"/>
            <person name="Copeland A."/>
            <person name="Lucas S."/>
            <person name="Lapidus A."/>
            <person name="Barry K."/>
            <person name="Detter J.C."/>
            <person name="Glavina del Rio T."/>
            <person name="Hammon N."/>
            <person name="Israni S."/>
            <person name="Dalin E."/>
            <person name="Tice H."/>
            <person name="Pitluck S."/>
            <person name="Brettin T."/>
            <person name="Bruce D."/>
            <person name="Han C."/>
            <person name="Tapia R."/>
            <person name="Goodwin L."/>
            <person name="Thompson L.S."/>
            <person name="Gilna P."/>
            <person name="Schmutz J."/>
            <person name="Larimer F."/>
            <person name="Land M."/>
            <person name="Hauser L."/>
            <person name="Kyrpides N."/>
            <person name="Kim E."/>
            <person name="Belas R."/>
            <person name="Moran M.A."/>
            <person name="Buchan A."/>
            <person name="Gonzalez J.M."/>
            <person name="Schell M.A."/>
            <person name="Sun F."/>
            <person name="Richardson P."/>
        </authorList>
    </citation>
    <scope>NUCLEOTIDE SEQUENCE [LARGE SCALE GENOMIC DNA]</scope>
    <source>
        <strain>TM1040</strain>
    </source>
</reference>
<protein>
    <recommendedName>
        <fullName evidence="1">tRNA-specific 2-thiouridylase MnmA</fullName>
        <ecNumber evidence="1">2.8.1.13</ecNumber>
    </recommendedName>
</protein>
<organism>
    <name type="scientific">Ruegeria sp. (strain TM1040)</name>
    <name type="common">Silicibacter sp.</name>
    <dbReference type="NCBI Taxonomy" id="292414"/>
    <lineage>
        <taxon>Bacteria</taxon>
        <taxon>Pseudomonadati</taxon>
        <taxon>Pseudomonadota</taxon>
        <taxon>Alphaproteobacteria</taxon>
        <taxon>Rhodobacterales</taxon>
        <taxon>Roseobacteraceae</taxon>
        <taxon>Ruegeria</taxon>
    </lineage>
</organism>
<proteinExistence type="inferred from homology"/>
<sequence length="381" mass="41718">MALDNEAPVNSLGFAKSPAETRVVVAMSGGVDSSVVAAYLADQGYDVVGVTLQLYDHGAALAKKGACCAGIDIHDARRVAEERGFPHYVLDYENIFKDAVIDEFADSYLAGATPVPCIRCNERVKFKDLLETAKDLEADCMATGHYIQRKMGEHGPELHSAEDANRDQSYFLFSTTPEQLDFLRFPLGHLPSKDATREMAAQYGLSVADKPDSQDICFVPNGDYASVIQKLRPGAAEPGQIVHADGRVLGEHNGVIHYTIGQRRGLGIGGLSEPLYVVKLDVDQKQVIVGPKEMLATRRVPVREINWLGDAPFTSRDEWHLSVKVRSTRPPRDAIIRPISETEAEVELFSAEEGISPGQACVFYDPNGSRIYGGGWIWKGQ</sequence>